<accession>B2LMP6</accession>
<sequence>MMLEHVLVLSAYLFSFVLYGLITSRNMVRALMCLELILNAVNLNFVTFSDFFDSRQLKGAIFSIFVIAIAAAEAAIGLAIVSSIYRNRKSTRINQSNLLNK</sequence>
<feature type="chain" id="PRO_0000360332" description="NAD(P)H-quinone oxidoreductase subunit 4L, chloroplastic">
    <location>
        <begin position="1"/>
        <end position="101"/>
    </location>
</feature>
<feature type="transmembrane region" description="Helical" evidence="1">
    <location>
        <begin position="2"/>
        <end position="22"/>
    </location>
</feature>
<feature type="transmembrane region" description="Helical" evidence="1">
    <location>
        <begin position="32"/>
        <end position="52"/>
    </location>
</feature>
<feature type="transmembrane region" description="Helical" evidence="1">
    <location>
        <begin position="61"/>
        <end position="81"/>
    </location>
</feature>
<evidence type="ECO:0000255" key="1">
    <source>
        <dbReference type="HAMAP-Rule" id="MF_01456"/>
    </source>
</evidence>
<geneLocation type="chloroplast"/>
<reference key="1">
    <citation type="submission" date="2008-03" db="EMBL/GenBank/DDBJ databases">
        <title>Guizotia abyssinica chloroplast sequenced using Solexa.</title>
        <authorList>
            <person name="Kane N.C."/>
            <person name="Dempewolf H."/>
            <person name="Stewart M.L."/>
            <person name="Cronk Q."/>
            <person name="Rieseberrg L.H."/>
        </authorList>
    </citation>
    <scope>NUCLEOTIDE SEQUENCE [LARGE SCALE GENOMIC DNA]</scope>
    <source>
        <strain>cv. PI 508077</strain>
    </source>
</reference>
<proteinExistence type="inferred from homology"/>
<gene>
    <name evidence="1" type="primary">ndhE</name>
    <name type="ordered locus">GuabCp075</name>
</gene>
<protein>
    <recommendedName>
        <fullName evidence="1">NAD(P)H-quinone oxidoreductase subunit 4L, chloroplastic</fullName>
        <ecNumber evidence="1">7.1.1.-</ecNumber>
    </recommendedName>
    <alternativeName>
        <fullName evidence="1">NAD(P)H dehydrogenase subunit 4L</fullName>
    </alternativeName>
    <alternativeName>
        <fullName evidence="1">NADH-plastoquinone oxidoreductase subunit 4L</fullName>
    </alternativeName>
</protein>
<organism>
    <name type="scientific">Guizotia abyssinica</name>
    <name type="common">Niger</name>
    <name type="synonym">Ramtilla</name>
    <dbReference type="NCBI Taxonomy" id="4230"/>
    <lineage>
        <taxon>Eukaryota</taxon>
        <taxon>Viridiplantae</taxon>
        <taxon>Streptophyta</taxon>
        <taxon>Embryophyta</taxon>
        <taxon>Tracheophyta</taxon>
        <taxon>Spermatophyta</taxon>
        <taxon>Magnoliopsida</taxon>
        <taxon>eudicotyledons</taxon>
        <taxon>Gunneridae</taxon>
        <taxon>Pentapetalae</taxon>
        <taxon>asterids</taxon>
        <taxon>campanulids</taxon>
        <taxon>Asterales</taxon>
        <taxon>Asteraceae</taxon>
        <taxon>Asteroideae</taxon>
        <taxon>Heliantheae alliance</taxon>
        <taxon>Millerieae</taxon>
        <taxon>Guizotia</taxon>
    </lineage>
</organism>
<name>NU4LC_GUIAB</name>
<comment type="function">
    <text evidence="1">NDH shuttles electrons from NAD(P)H:plastoquinone, via FMN and iron-sulfur (Fe-S) centers, to quinones in the photosynthetic chain and possibly in a chloroplast respiratory chain. The immediate electron acceptor for the enzyme in this species is believed to be plastoquinone. Couples the redox reaction to proton translocation, and thus conserves the redox energy in a proton gradient.</text>
</comment>
<comment type="catalytic activity">
    <reaction evidence="1">
        <text>a plastoquinone + NADH + (n+1) H(+)(in) = a plastoquinol + NAD(+) + n H(+)(out)</text>
        <dbReference type="Rhea" id="RHEA:42608"/>
        <dbReference type="Rhea" id="RHEA-COMP:9561"/>
        <dbReference type="Rhea" id="RHEA-COMP:9562"/>
        <dbReference type="ChEBI" id="CHEBI:15378"/>
        <dbReference type="ChEBI" id="CHEBI:17757"/>
        <dbReference type="ChEBI" id="CHEBI:57540"/>
        <dbReference type="ChEBI" id="CHEBI:57945"/>
        <dbReference type="ChEBI" id="CHEBI:62192"/>
    </reaction>
</comment>
<comment type="catalytic activity">
    <reaction evidence="1">
        <text>a plastoquinone + NADPH + (n+1) H(+)(in) = a plastoquinol + NADP(+) + n H(+)(out)</text>
        <dbReference type="Rhea" id="RHEA:42612"/>
        <dbReference type="Rhea" id="RHEA-COMP:9561"/>
        <dbReference type="Rhea" id="RHEA-COMP:9562"/>
        <dbReference type="ChEBI" id="CHEBI:15378"/>
        <dbReference type="ChEBI" id="CHEBI:17757"/>
        <dbReference type="ChEBI" id="CHEBI:57783"/>
        <dbReference type="ChEBI" id="CHEBI:58349"/>
        <dbReference type="ChEBI" id="CHEBI:62192"/>
    </reaction>
</comment>
<comment type="subunit">
    <text evidence="1">NDH is composed of at least 16 different subunits, 5 of which are encoded in the nucleus.</text>
</comment>
<comment type="subcellular location">
    <subcellularLocation>
        <location evidence="1">Plastid</location>
        <location evidence="1">Chloroplast thylakoid membrane</location>
        <topology evidence="1">Multi-pass membrane protein</topology>
    </subcellularLocation>
</comment>
<comment type="similarity">
    <text evidence="1">Belongs to the complex I subunit 4L family.</text>
</comment>
<keyword id="KW-0150">Chloroplast</keyword>
<keyword id="KW-0472">Membrane</keyword>
<keyword id="KW-0520">NAD</keyword>
<keyword id="KW-0521">NADP</keyword>
<keyword id="KW-0934">Plastid</keyword>
<keyword id="KW-0618">Plastoquinone</keyword>
<keyword id="KW-0874">Quinone</keyword>
<keyword id="KW-0793">Thylakoid</keyword>
<keyword id="KW-1278">Translocase</keyword>
<keyword id="KW-0812">Transmembrane</keyword>
<keyword id="KW-1133">Transmembrane helix</keyword>
<keyword id="KW-0813">Transport</keyword>
<dbReference type="EC" id="7.1.1.-" evidence="1"/>
<dbReference type="EMBL" id="EU549769">
    <property type="protein sequence ID" value="ACB86579.1"/>
    <property type="molecule type" value="Genomic_DNA"/>
</dbReference>
<dbReference type="RefSeq" id="YP_001837413.1">
    <property type="nucleotide sequence ID" value="NC_010601.1"/>
</dbReference>
<dbReference type="SMR" id="B2LMP6"/>
<dbReference type="GeneID" id="6219101"/>
<dbReference type="GO" id="GO:0009535">
    <property type="term" value="C:chloroplast thylakoid membrane"/>
    <property type="evidence" value="ECO:0007669"/>
    <property type="project" value="UniProtKB-SubCell"/>
</dbReference>
<dbReference type="GO" id="GO:0030964">
    <property type="term" value="C:NADH dehydrogenase complex"/>
    <property type="evidence" value="ECO:0007669"/>
    <property type="project" value="TreeGrafter"/>
</dbReference>
<dbReference type="GO" id="GO:0016655">
    <property type="term" value="F:oxidoreductase activity, acting on NAD(P)H, quinone or similar compound as acceptor"/>
    <property type="evidence" value="ECO:0007669"/>
    <property type="project" value="UniProtKB-UniRule"/>
</dbReference>
<dbReference type="GO" id="GO:0048038">
    <property type="term" value="F:quinone binding"/>
    <property type="evidence" value="ECO:0007669"/>
    <property type="project" value="UniProtKB-KW"/>
</dbReference>
<dbReference type="GO" id="GO:0042773">
    <property type="term" value="P:ATP synthesis coupled electron transport"/>
    <property type="evidence" value="ECO:0007669"/>
    <property type="project" value="InterPro"/>
</dbReference>
<dbReference type="GO" id="GO:0019684">
    <property type="term" value="P:photosynthesis, light reaction"/>
    <property type="evidence" value="ECO:0007669"/>
    <property type="project" value="UniProtKB-UniRule"/>
</dbReference>
<dbReference type="FunFam" id="1.10.287.3510:FF:000001">
    <property type="entry name" value="NADH-quinone oxidoreductase subunit K"/>
    <property type="match status" value="1"/>
</dbReference>
<dbReference type="Gene3D" id="1.10.287.3510">
    <property type="match status" value="1"/>
</dbReference>
<dbReference type="HAMAP" id="MF_01456">
    <property type="entry name" value="NDH1_NuoK"/>
    <property type="match status" value="1"/>
</dbReference>
<dbReference type="InterPro" id="IPR001133">
    <property type="entry name" value="NADH_UbQ_OxRdtase_chain4L/K"/>
</dbReference>
<dbReference type="InterPro" id="IPR039428">
    <property type="entry name" value="NUOK/Mnh_C1-like"/>
</dbReference>
<dbReference type="NCBIfam" id="NF004320">
    <property type="entry name" value="PRK05715.1-2"/>
    <property type="match status" value="1"/>
</dbReference>
<dbReference type="PANTHER" id="PTHR11434:SF16">
    <property type="entry name" value="NADH-UBIQUINONE OXIDOREDUCTASE CHAIN 4L"/>
    <property type="match status" value="1"/>
</dbReference>
<dbReference type="PANTHER" id="PTHR11434">
    <property type="entry name" value="NADH-UBIQUINONE OXIDOREDUCTASE SUBUNIT ND4L"/>
    <property type="match status" value="1"/>
</dbReference>
<dbReference type="Pfam" id="PF00420">
    <property type="entry name" value="Oxidored_q2"/>
    <property type="match status" value="1"/>
</dbReference>